<sequence>MNRSRAIVQRGRVLPPPAPLDTTNLAGRRTLQGRAKMASVPVYCLCRLPYDVTRFMIECDMCQDWFHGSCVGVEEEKAADIDLYHCPNCEVLHGPSIMKKRRGSSKGHDTHKGKPVKTGSPTFVRELRSRTFDSSDEVILKPTGNQLTVEFLEENSFSVPILVLKKDGLGMTLPSPSFTVRDVEHYVGSDKEIDVIDVTRQADCKMKLGDFVKYYYSGKREKVLNVISLEFSDTRLSNLVETPKIVRKLSWVENLWPEECVFERPNVQKYCLMSVRDSYTDFHIDFGGTSVWYHVLKGEKIFYLIRPTNANLTLFECWSSSSNQNEMFFGDQVDKCYKCSVKQGQTLFIPTGWIHAVLTPVDCLAFGGNFLHSLNIEMQLKAYEIEKRLSTADLFRFPNFETICWYVGKHILDIFRGLRENRRHPASYLVHGGKALNLAFRAWTRKEALPDHEDEIPETVRTVQLIKDLAREIRLVEDIFQQNVGKTSNIFGLQRIFPAGSIPLTRPAHSTSVSMSRLSLPSKNGSKKKGLKPKELFKKAERKGKESSALGPAGQLSYNLMDTYSHQALKTGSFQKAKFNITGACLNDSDDDSPDLDLDGNESPLALLMSNGSTKRVKSLSKSRRTKIAKKVDKARLMAEQVMEDEFDLDSDDELQIDERLGKEKATLIIRPKFPRKLPRAKPCSDPNRVREPGEVEFDIEEDYTTDEDMVEGVEGKLGNGSGAGGILDLLKASRQVGGPDYAALTEAPASPSTQEAIQGMLCMANLQSSSSSPATSSLQAWWTGGQDRSSGSSSSGLGTVSNSPASQRTPGKRPIKRPAYWRTESEEEEENASLDEQDSLGACFKDAEYIYPSLESDDDDPALKSRPKKKKNSDDAPWSPKARVTPTLPKQDRPVREGTRVASIETGLAAAAAKLAQQELQKAQKKKYIKKKPLLKEVEQPRPQDSNLSLTVPAPTVAATPQLVTSSSPLPPPEPKQEALSGSLADHEYTARPNAFGMAQANRSTTPMAPGVFLTQRRPSVGSQSNQAGQGKRPKKGLATAKQRLGRILKIHRNGKLLL</sequence>
<protein>
    <recommendedName>
        <fullName>Histone lysine demethylase PHF8</fullName>
        <ecNumber evidence="7 8">1.14.11.27</ecNumber>
        <ecNumber evidence="10">1.14.11.65</ecNumber>
    </recommendedName>
    <alternativeName>
        <fullName>PHD finger protein 8</fullName>
    </alternativeName>
    <alternativeName>
        <fullName evidence="23">[histone H3]-dimethyl-L-lysine(36) demethylase PHF8</fullName>
    </alternativeName>
    <alternativeName>
        <fullName evidence="23">[histone H3]-dimethyl-L-lysine(9) demethylase PHF8</fullName>
    </alternativeName>
</protein>
<organism>
    <name type="scientific">Homo sapiens</name>
    <name type="common">Human</name>
    <dbReference type="NCBI Taxonomy" id="9606"/>
    <lineage>
        <taxon>Eukaryota</taxon>
        <taxon>Metazoa</taxon>
        <taxon>Chordata</taxon>
        <taxon>Craniata</taxon>
        <taxon>Vertebrata</taxon>
        <taxon>Euteleostomi</taxon>
        <taxon>Mammalia</taxon>
        <taxon>Eutheria</taxon>
        <taxon>Euarchontoglires</taxon>
        <taxon>Primates</taxon>
        <taxon>Haplorrhini</taxon>
        <taxon>Catarrhini</taxon>
        <taxon>Hominidae</taxon>
        <taxon>Homo</taxon>
    </lineage>
</organism>
<proteinExistence type="evidence at protein level"/>
<comment type="function">
    <text evidence="7 8 9 10 11 12 13 14 15 16 18">Histone lysine demethylase with selectivity for the di- and monomethyl states that plays a key role cell cycle progression, rDNA transcription and brain development. Demethylates mono- and dimethylated histone H3 'Lys-9' residue (H3K9Me1 and H3K9Me2), dimethylated H3 'Lys-27' (H3K27Me2) and monomethylated histone H4 'Lys-20' residue (H4K20Me1). Acts as a transcription activator as H3K9Me1, H3K9Me2, H3K27Me2 and H4K20Me1 are epigenetic repressive marks. Involved in cell cycle progression by being required to control G1-S transition. Acts as a coactivator of rDNA transcription, by activating polymerase I (pol I) mediated transcription of rRNA genes. Required for brain development, probably by regulating expression of neuron-specific genes. Only has activity toward H4K20Me1 when nucleosome is used as a substrate and when not histone octamer is used as substrate. May also have weak activity toward dimethylated H3 'Lys-36' (H3K36Me2), however, the relevance of this result remains unsure in vivo. Specifically binds trimethylated 'Lys-4' of histone H3 (H3K4me3), affecting histone demethylase specificity: has weak activity toward H3K9Me2 in absence of H3K4me3, while it has high activity toward H3K9me2 when binding H3K4me3. Positively modulates transcription of histone demethylase KDM5C, acting synergistically with transcription factor ARX; synergy may be related to enrichment of histone H3K4me3 in regulatory elements.</text>
</comment>
<comment type="catalytic activity">
    <reaction evidence="7 8">
        <text>N(6),N(6)-dimethyl-L-lysyl(36)-[histone H3] + 2 2-oxoglutarate + 2 O2 = L-lysyl(36)-[histone H3] + 2 formaldehyde + 2 succinate + 2 CO2</text>
        <dbReference type="Rhea" id="RHEA:42032"/>
        <dbReference type="Rhea" id="RHEA-COMP:9785"/>
        <dbReference type="Rhea" id="RHEA-COMP:9787"/>
        <dbReference type="ChEBI" id="CHEBI:15379"/>
        <dbReference type="ChEBI" id="CHEBI:16526"/>
        <dbReference type="ChEBI" id="CHEBI:16810"/>
        <dbReference type="ChEBI" id="CHEBI:16842"/>
        <dbReference type="ChEBI" id="CHEBI:29969"/>
        <dbReference type="ChEBI" id="CHEBI:30031"/>
        <dbReference type="ChEBI" id="CHEBI:61976"/>
        <dbReference type="EC" id="1.14.11.27"/>
    </reaction>
</comment>
<comment type="catalytic activity">
    <reaction evidence="10">
        <text>N(6),N(6)-dimethyl-L-lysyl(9)-[histone H3] + 2 2-oxoglutarate + 2 O2 = L-lysyl(9)-[histone H3] + 2 formaldehyde + 2 succinate + 2 CO2</text>
        <dbReference type="Rhea" id="RHEA:60188"/>
        <dbReference type="Rhea" id="RHEA-COMP:15541"/>
        <dbReference type="Rhea" id="RHEA-COMP:15546"/>
        <dbReference type="ChEBI" id="CHEBI:15379"/>
        <dbReference type="ChEBI" id="CHEBI:16526"/>
        <dbReference type="ChEBI" id="CHEBI:16810"/>
        <dbReference type="ChEBI" id="CHEBI:16842"/>
        <dbReference type="ChEBI" id="CHEBI:29969"/>
        <dbReference type="ChEBI" id="CHEBI:30031"/>
        <dbReference type="ChEBI" id="CHEBI:61976"/>
        <dbReference type="EC" id="1.14.11.65"/>
    </reaction>
</comment>
<comment type="cofactor">
    <cofactor evidence="24 25">
        <name>Fe(2+)</name>
        <dbReference type="ChEBI" id="CHEBI:29033"/>
    </cofactor>
    <text evidence="24 25">Binds 1 Fe(2+) ion per subunit.</text>
</comment>
<comment type="biophysicochemical properties">
    <kinetics>
        <KM evidence="8">134 uM for histone H3 H3K9Me2</KM>
        <KM evidence="8">8 uM for histone H3 H3K4me3 and H3K9Me2</KM>
    </kinetics>
</comment>
<comment type="subunit">
    <text evidence="8 9 10 11 16 19">Interacts with POLR1B, UBTF, SETD1A, HCFC1, E2F1 and ZNF711. Interacts with ZNF263; recruited to the SIX3 promoter along with other proteins involved in chromatin modification and transcriptional corepression where it contributes to transcriptional repression (PubMed:32051553).</text>
</comment>
<comment type="interaction">
    <interactant intactId="EBI-1560800">
        <id>Q9UPP1</id>
    </interactant>
    <interactant intactId="EBI-11107474">
        <id>Q96QS3</id>
        <label>ARX</label>
    </interactant>
    <organismsDiffer>false</organismsDiffer>
    <experiments>3</experiments>
</comment>
<comment type="interaction">
    <interactant intactId="EBI-1560800">
        <id>Q9UPP1</id>
    </interactant>
    <interactant intactId="EBI-632552">
        <id>Q06330</id>
        <label>RBPJ</label>
    </interactant>
    <organismsDiffer>false</organismsDiffer>
    <experiments>2</experiments>
</comment>
<comment type="interaction">
    <interactant intactId="EBI-1560800">
        <id>Q9UPP1</id>
    </interactant>
    <interactant intactId="EBI-2849152">
        <id>Q9Y462</id>
        <label>ZNF711</label>
    </interactant>
    <organismsDiffer>false</organismsDiffer>
    <experiments>7</experiments>
</comment>
<comment type="interaction">
    <interactant intactId="EBI-6601215">
        <id>Q9UPP1-2</id>
    </interactant>
    <interactant intactId="EBI-396188">
        <id>P51610-1</id>
        <label>HCFC1</label>
    </interactant>
    <organismsDiffer>false</organismsDiffer>
    <experiments>2</experiments>
</comment>
<comment type="interaction">
    <interactant intactId="EBI-6601215">
        <id>Q9UPP1-2</id>
    </interactant>
    <interactant intactId="EBI-867256">
        <id>Q15156</id>
        <label>PML-RAR</label>
    </interactant>
    <organismsDiffer>false</organismsDiffer>
    <experiments>6</experiments>
</comment>
<comment type="interaction">
    <interactant intactId="EBI-6601215">
        <id>Q9UPP1-2</id>
    </interactant>
    <interactant intactId="EBI-413374">
        <id>P10276</id>
        <label>RARA</label>
    </interactant>
    <organismsDiffer>false</organismsDiffer>
    <experiments>2</experiments>
</comment>
<comment type="subcellular location">
    <subcellularLocation>
        <location evidence="7 16">Nucleus</location>
    </subcellularLocation>
    <subcellularLocation>
        <location evidence="10 13">Nucleus</location>
        <location evidence="10 13">Nucleolus</location>
    </subcellularLocation>
    <text evidence="16">Recruited to H3K4me3 sites on chromatin during interphase (PubMed:20622854). Dissociates from chromatin when cells enter mitosis (PubMed:20622854).</text>
</comment>
<comment type="alternative products">
    <event type="alternative splicing"/>
    <isoform>
        <id>Q9UPP1-1</id>
        <name>1</name>
        <sequence type="displayed"/>
    </isoform>
    <isoform>
        <id>Q9UPP1-2</id>
        <name>2</name>
        <sequence type="described" ref="VSP_014964"/>
    </isoform>
    <isoform>
        <id>Q9UPP1-3</id>
        <name>3</name>
        <sequence type="described" ref="VSP_014965"/>
    </isoform>
    <isoform>
        <id>Q9UPP1-4</id>
        <name>4</name>
        <sequence type="described" ref="VSP_014964 VSP_014965 VSP_043640"/>
    </isoform>
    <isoform>
        <id>Q9UPP1-5</id>
        <name>5</name>
        <sequence type="described" ref="VSP_014964 VSP_054019 VSP_054020 VSP_054021"/>
    </isoform>
</comment>
<comment type="domain">
    <text>The PHD-type zinc finger mediates the binding to H3K4me3. Binding to H3K4me3 promotes its access to H3K9me2.</text>
</comment>
<comment type="domain">
    <text>The linker region is a critical determinant of demethylase specificity. It enables the active site of JmjC to reach the target H3K9me2 when the PHD-type zinc finger binds to H3K4me3.</text>
</comment>
<comment type="PTM">
    <text evidence="16">Phosphorylation at Ser-69 and Ser-120 are required for dissociation from chromatin and accumulation of H4K20Me1 levels during prophase.</text>
</comment>
<comment type="disease" evidence="5 6 9 10 11 12 14 15 16 18">
    <disease id="DI-01966">
        <name>Intellectual developmental disorder, X-linked, syndromic, Siderius type</name>
        <acronym>MRXSSD</acronym>
        <description>A syndrome characterized by mild to borderline intellectual disability with or without cleft lip/cleft palate.</description>
        <dbReference type="MIM" id="300263"/>
    </disease>
    <text>The disease is caused by variants affecting the gene represented in this entry.</text>
</comment>
<comment type="similarity">
    <text evidence="23">Belongs to the JHDM1 histone demethylase family. JHDM1D subfamily.</text>
</comment>
<comment type="sequence caution" evidence="23">
    <conflict type="erroneous initiation">
        <sequence resource="EMBL-CDS" id="BAA83063"/>
    </conflict>
    <text>Extended N-terminus.</text>
</comment>
<comment type="sequence caution" evidence="23">
    <conflict type="erroneous initiation">
        <sequence resource="EMBL-CDS" id="BAB13877"/>
    </conflict>
    <text>Truncated N-terminus.</text>
</comment>
<comment type="sequence caution" evidence="23">
    <conflict type="erroneous termination">
        <sequence resource="EMBL-CDS" id="CAI45929"/>
    </conflict>
    <text>Truncated C-terminus.</text>
</comment>
<evidence type="ECO:0000250" key="1">
    <source>
        <dbReference type="UniProtKB" id="Q80TJ7"/>
    </source>
</evidence>
<evidence type="ECO:0000255" key="2">
    <source>
        <dbReference type="PROSITE-ProRule" id="PRU00146"/>
    </source>
</evidence>
<evidence type="ECO:0000255" key="3">
    <source>
        <dbReference type="PROSITE-ProRule" id="PRU00538"/>
    </source>
</evidence>
<evidence type="ECO:0000256" key="4">
    <source>
        <dbReference type="SAM" id="MobiDB-lite"/>
    </source>
</evidence>
<evidence type="ECO:0000269" key="5">
    <source>
    </source>
</evidence>
<evidence type="ECO:0000269" key="6">
    <source>
    </source>
</evidence>
<evidence type="ECO:0000269" key="7">
    <source>
    </source>
</evidence>
<evidence type="ECO:0000269" key="8">
    <source>
    </source>
</evidence>
<evidence type="ECO:0000269" key="9">
    <source>
    </source>
</evidence>
<evidence type="ECO:0000269" key="10">
    <source>
    </source>
</evidence>
<evidence type="ECO:0000269" key="11">
    <source>
    </source>
</evidence>
<evidence type="ECO:0000269" key="12">
    <source>
    </source>
</evidence>
<evidence type="ECO:0000269" key="13">
    <source>
    </source>
</evidence>
<evidence type="ECO:0000269" key="14">
    <source>
    </source>
</evidence>
<evidence type="ECO:0000269" key="15">
    <source>
    </source>
</evidence>
<evidence type="ECO:0000269" key="16">
    <source>
    </source>
</evidence>
<evidence type="ECO:0000269" key="17">
    <source>
    </source>
</evidence>
<evidence type="ECO:0000269" key="18">
    <source>
    </source>
</evidence>
<evidence type="ECO:0000269" key="19">
    <source>
    </source>
</evidence>
<evidence type="ECO:0000303" key="20">
    <source>
    </source>
</evidence>
<evidence type="ECO:0000303" key="21">
    <source>
    </source>
</evidence>
<evidence type="ECO:0000303" key="22">
    <source>
    </source>
</evidence>
<evidence type="ECO:0000305" key="23"/>
<evidence type="ECO:0000305" key="24">
    <source>
    </source>
</evidence>
<evidence type="ECO:0000305" key="25">
    <source>
    </source>
</evidence>
<evidence type="ECO:0007744" key="26">
    <source>
    </source>
</evidence>
<evidence type="ECO:0007744" key="27">
    <source>
    </source>
</evidence>
<evidence type="ECO:0007744" key="28">
    <source>
    </source>
</evidence>
<evidence type="ECO:0007744" key="29">
    <source>
    </source>
</evidence>
<evidence type="ECO:0007744" key="30">
    <source>
    </source>
</evidence>
<evidence type="ECO:0007744" key="31">
    <source>
    </source>
</evidence>
<evidence type="ECO:0007829" key="32">
    <source>
        <dbReference type="PDB" id="2WWU"/>
    </source>
</evidence>
<evidence type="ECO:0007829" key="33">
    <source>
        <dbReference type="PDB" id="3K3N"/>
    </source>
</evidence>
<evidence type="ECO:0007829" key="34">
    <source>
        <dbReference type="PDB" id="3K3O"/>
    </source>
</evidence>
<evidence type="ECO:0007829" key="35">
    <source>
        <dbReference type="PDB" id="3KV4"/>
    </source>
</evidence>
<evidence type="ECO:0007829" key="36">
    <source>
        <dbReference type="PDB" id="4DO0"/>
    </source>
</evidence>
<evidence type="ECO:0007829" key="37">
    <source>
        <dbReference type="PDB" id="7CMZ"/>
    </source>
</evidence>
<accession>Q9UPP1</accession>
<accession>B3KMV4</accession>
<accession>B7Z911</accession>
<accession>Q5H9U5</accession>
<accession>Q5JPR9</accession>
<accession>Q5JPS0</accession>
<accession>Q5JPS2</accession>
<accession>Q5JPS3</accession>
<accession>Q5VUJ4</accession>
<accession>Q7Z6D4</accession>
<accession>Q9HAH2</accession>
<keyword id="KW-0002">3D-structure</keyword>
<keyword id="KW-0010">Activator</keyword>
<keyword id="KW-0025">Alternative splicing</keyword>
<keyword id="KW-0131">Cell cycle</keyword>
<keyword id="KW-0156">Chromatin regulator</keyword>
<keyword id="KW-0223">Dioxygenase</keyword>
<keyword id="KW-0225">Disease variant</keyword>
<keyword id="KW-0991">Intellectual disability</keyword>
<keyword id="KW-0408">Iron</keyword>
<keyword id="KW-0479">Metal-binding</keyword>
<keyword id="KW-0539">Nucleus</keyword>
<keyword id="KW-0560">Oxidoreductase</keyword>
<keyword id="KW-0597">Phosphoprotein</keyword>
<keyword id="KW-1267">Proteomics identification</keyword>
<keyword id="KW-1185">Reference proteome</keyword>
<keyword id="KW-0804">Transcription</keyword>
<keyword id="KW-0805">Transcription regulation</keyword>
<keyword id="KW-0862">Zinc</keyword>
<keyword id="KW-0863">Zinc-finger</keyword>
<gene>
    <name type="primary">PHF8</name>
    <name type="synonym">KIAA1111</name>
    <name type="synonym">ZNF422</name>
</gene>
<feature type="chain" id="PRO_0000059295" description="Histone lysine demethylase PHF8">
    <location>
        <begin position="1"/>
        <end position="1060"/>
    </location>
</feature>
<feature type="domain" description="JmjC" evidence="3">
    <location>
        <begin position="231"/>
        <end position="387"/>
    </location>
</feature>
<feature type="zinc finger region" description="PHD-type" evidence="2">
    <location>
        <begin position="41"/>
        <end position="92"/>
    </location>
</feature>
<feature type="region of interest" description="Disordered" evidence="4">
    <location>
        <begin position="100"/>
        <end position="120"/>
    </location>
</feature>
<feature type="region of interest" description="Linker">
    <location>
        <begin position="101"/>
        <end position="115"/>
    </location>
</feature>
<feature type="region of interest" description="Disordered" evidence="4">
    <location>
        <begin position="508"/>
        <end position="534"/>
    </location>
</feature>
<feature type="region of interest" description="Disordered" evidence="4">
    <location>
        <begin position="768"/>
        <end position="840"/>
    </location>
</feature>
<feature type="region of interest" description="Disordered" evidence="4">
    <location>
        <begin position="852"/>
        <end position="902"/>
    </location>
</feature>
<feature type="region of interest" description="Disordered" evidence="4">
    <location>
        <begin position="915"/>
        <end position="1046"/>
    </location>
</feature>
<feature type="compositionally biased region" description="Polar residues" evidence="4">
    <location>
        <begin position="508"/>
        <end position="517"/>
    </location>
</feature>
<feature type="compositionally biased region" description="Low complexity" evidence="4">
    <location>
        <begin position="769"/>
        <end position="778"/>
    </location>
</feature>
<feature type="compositionally biased region" description="Low complexity" evidence="4">
    <location>
        <begin position="785"/>
        <end position="804"/>
    </location>
</feature>
<feature type="compositionally biased region" description="Acidic residues" evidence="4">
    <location>
        <begin position="826"/>
        <end position="839"/>
    </location>
</feature>
<feature type="compositionally biased region" description="Basic and acidic residues" evidence="4">
    <location>
        <begin position="891"/>
        <end position="900"/>
    </location>
</feature>
<feature type="compositionally biased region" description="Basic residues" evidence="4">
    <location>
        <begin position="924"/>
        <end position="934"/>
    </location>
</feature>
<feature type="compositionally biased region" description="Polar residues" evidence="4">
    <location>
        <begin position="1018"/>
        <end position="1030"/>
    </location>
</feature>
<feature type="binding site">
    <location>
        <position position="280"/>
    </location>
    <ligand>
        <name>substrate</name>
    </ligand>
</feature>
<feature type="binding site" evidence="3 8 9">
    <location>
        <position position="283"/>
    </location>
    <ligand>
        <name>Fe cation</name>
        <dbReference type="ChEBI" id="CHEBI:24875"/>
        <note>catalytic</note>
    </ligand>
</feature>
<feature type="binding site" evidence="3 8 9">
    <location>
        <position position="285"/>
    </location>
    <ligand>
        <name>Fe cation</name>
        <dbReference type="ChEBI" id="CHEBI:24875"/>
        <note>catalytic</note>
    </ligand>
</feature>
<feature type="binding site">
    <location>
        <position position="300"/>
    </location>
    <ligand>
        <name>substrate</name>
    </ligand>
</feature>
<feature type="binding site" evidence="3 8 9">
    <location>
        <position position="355"/>
    </location>
    <ligand>
        <name>Fe cation</name>
        <dbReference type="ChEBI" id="CHEBI:24875"/>
        <note>catalytic</note>
    </ligand>
</feature>
<feature type="modified residue" description="Phosphoserine; by CDK1" evidence="16">
    <location>
        <position position="69"/>
    </location>
</feature>
<feature type="modified residue" description="Phosphoserine; by CDK1" evidence="16 31">
    <location>
        <position position="120"/>
    </location>
</feature>
<feature type="modified residue" description="Phosphoserine" evidence="28">
    <location>
        <position position="651"/>
    </location>
</feature>
<feature type="modified residue" description="Phosphotyrosine" evidence="1">
    <location>
        <position position="704"/>
    </location>
</feature>
<feature type="modified residue" description="Phosphothreonine" evidence="27 28">
    <location>
        <position position="705"/>
    </location>
</feature>
<feature type="modified residue" description="Phosphothreonine" evidence="27 28">
    <location>
        <position position="706"/>
    </location>
</feature>
<feature type="modified residue" description="Phosphoserine" evidence="31">
    <location>
        <position position="722"/>
    </location>
</feature>
<feature type="modified residue" description="Phosphoserine" evidence="29 31">
    <location>
        <position position="804"/>
    </location>
</feature>
<feature type="modified residue" description="Phosphoserine" evidence="1">
    <location>
        <position position="826"/>
    </location>
</feature>
<feature type="modified residue" description="Phosphoserine" evidence="1">
    <location>
        <position position="834"/>
    </location>
</feature>
<feature type="modified residue" description="Phosphoserine" evidence="27 28 30">
    <location>
        <position position="854"/>
    </location>
</feature>
<feature type="modified residue" description="Phosphoserine" evidence="26 27 28 29 30 31">
    <location>
        <position position="857"/>
    </location>
</feature>
<feature type="modified residue" description="Phosphoserine" evidence="27 29 30 31">
    <location>
        <position position="880"/>
    </location>
</feature>
<feature type="splice variant" id="VSP_014964" description="In isoform 2, isoform 4 and isoform 5." evidence="20 21 22">
    <location>
        <begin position="1"/>
        <end position="36"/>
    </location>
</feature>
<feature type="splice variant" id="VSP_014965" description="In isoform 3 and isoform 4." evidence="20">
    <location>
        <begin position="478"/>
        <end position="578"/>
    </location>
</feature>
<feature type="splice variant" id="VSP_054019" description="In isoform 5." evidence="21">
    <original>KLGNGSGAGGILDLLKASRQVGGPDYAALT</original>
    <variation>YQTATPAPAQGAS</variation>
    <location>
        <begin position="717"/>
        <end position="746"/>
    </location>
</feature>
<feature type="splice variant" id="VSP_054020" description="In isoform 5." evidence="21">
    <original>ELQKAQKKKYIK</original>
    <variation>VKKMKLSLTDSG</variation>
    <location>
        <begin position="920"/>
        <end position="931"/>
    </location>
</feature>
<feature type="splice variant" id="VSP_054021" description="In isoform 5." evidence="21">
    <location>
        <begin position="932"/>
        <end position="1060"/>
    </location>
</feature>
<feature type="splice variant" id="VSP_043640" description="In isoform 4." evidence="20">
    <original>L</original>
    <variation>LRQVIVQAECRQAIHEPKLKRRDAHP</variation>
    <location>
        <position position="1060"/>
    </location>
</feature>
<feature type="sequence variant" id="VAR_062250" description="In MRXSSD; abolishes histone methyltransferase activity; reduces transcriptional activation activity; dbSNP:rs121918524." evidence="6 9 10 11 12 14 15 16 18">
    <original>F</original>
    <variation>S</variation>
    <location>
        <position position="315"/>
    </location>
</feature>
<feature type="sequence variant" id="VAR_076254" description="Found in patients with autism spectrum disorders; uncertain significance." evidence="17">
    <location>
        <position position="969"/>
    </location>
</feature>
<feature type="mutagenesis site" description="Abolishes binding to H3K4me3; when associated with A-50." evidence="10 15">
    <original>Y</original>
    <variation>A</variation>
    <location>
        <position position="43"/>
    </location>
</feature>
<feature type="mutagenesis site" description="Abolishes binding to H3K4me3; when associated with A-43. Abolishes binding to H3K4me3; when associated with A-65." evidence="15">
    <original>Y</original>
    <variation>A</variation>
    <location>
        <position position="50"/>
    </location>
</feature>
<feature type="mutagenesis site" description="Abolishes binding to H3K4me3; when associated with A-50." evidence="15">
    <original>W</original>
    <variation>A</variation>
    <location>
        <position position="65"/>
    </location>
</feature>
<feature type="mutagenesis site" description="Impairs phosphorylation by CDK1 and dissociation from chromatin when cells enter mitosis; when associated with A-120." evidence="16">
    <original>S</original>
    <variation>A</variation>
    <location>
        <position position="69"/>
    </location>
</feature>
<feature type="mutagenesis site" description="Impairs phosphorylation by CDK1 and dissociation from chromatin when cells enter mitosis; when associated with A-69." evidence="16">
    <original>S</original>
    <variation>A</variation>
    <location>
        <position position="120"/>
    </location>
</feature>
<feature type="mutagenesis site" description="Abolishes histone methyltransferase activity." evidence="10">
    <original>HID</original>
    <variation>AAA</variation>
    <location>
        <begin position="283"/>
        <end position="285"/>
    </location>
</feature>
<feature type="mutagenesis site" description="Abolishes histone methyltransferase activity." evidence="11 13 16">
    <original>H</original>
    <variation>A</variation>
    <location>
        <position position="283"/>
    </location>
</feature>
<feature type="mutagenesis site" description="Reduces transcriptional activation activity." evidence="18">
    <original>R</original>
    <variation>H</variation>
    <location>
        <position position="943"/>
    </location>
</feature>
<feature type="sequence conflict" description="In Ref. 2; BAB13877." evidence="23" ref="2">
    <original>S</original>
    <variation>P</variation>
    <location>
        <position position="232"/>
    </location>
</feature>
<feature type="turn" evidence="35">
    <location>
        <begin position="44"/>
        <end position="47"/>
    </location>
</feature>
<feature type="strand" evidence="35">
    <location>
        <begin position="56"/>
        <end position="58"/>
    </location>
</feature>
<feature type="turn" evidence="35">
    <location>
        <begin position="60"/>
        <end position="62"/>
    </location>
</feature>
<feature type="strand" evidence="35">
    <location>
        <begin position="65"/>
        <end position="67"/>
    </location>
</feature>
<feature type="helix" evidence="35">
    <location>
        <begin position="68"/>
        <end position="71"/>
    </location>
</feature>
<feature type="helix" evidence="35">
    <location>
        <begin position="75"/>
        <end position="78"/>
    </location>
</feature>
<feature type="strand" evidence="35">
    <location>
        <begin position="81"/>
        <end position="83"/>
    </location>
</feature>
<feature type="helix" evidence="35">
    <location>
        <begin position="87"/>
        <end position="93"/>
    </location>
</feature>
<feature type="helix" evidence="32">
    <location>
        <begin position="121"/>
        <end position="129"/>
    </location>
</feature>
<feature type="turn" evidence="34">
    <location>
        <begin position="136"/>
        <end position="138"/>
    </location>
</feature>
<feature type="turn" evidence="34">
    <location>
        <begin position="144"/>
        <end position="146"/>
    </location>
</feature>
<feature type="helix" evidence="34">
    <location>
        <begin position="149"/>
        <end position="155"/>
    </location>
</feature>
<feature type="strand" evidence="34">
    <location>
        <begin position="161"/>
        <end position="165"/>
    </location>
</feature>
<feature type="turn" evidence="36">
    <location>
        <begin position="167"/>
        <end position="170"/>
    </location>
</feature>
<feature type="helix" evidence="34">
    <location>
        <begin position="180"/>
        <end position="187"/>
    </location>
</feature>
<feature type="strand" evidence="34">
    <location>
        <begin position="192"/>
        <end position="197"/>
    </location>
</feature>
<feature type="turn" evidence="34">
    <location>
        <begin position="198"/>
        <end position="201"/>
    </location>
</feature>
<feature type="strand" evidence="34">
    <location>
        <begin position="202"/>
        <end position="207"/>
    </location>
</feature>
<feature type="helix" evidence="34">
    <location>
        <begin position="208"/>
        <end position="215"/>
    </location>
</feature>
<feature type="strand" evidence="34">
    <location>
        <begin position="224"/>
        <end position="230"/>
    </location>
</feature>
<feature type="helix" evidence="34">
    <location>
        <begin position="235"/>
        <end position="238"/>
    </location>
</feature>
<feature type="helix" evidence="34">
    <location>
        <begin position="244"/>
        <end position="249"/>
    </location>
</feature>
<feature type="helix" evidence="34">
    <location>
        <begin position="251"/>
        <end position="255"/>
    </location>
</feature>
<feature type="strand" evidence="34">
    <location>
        <begin position="270"/>
        <end position="274"/>
    </location>
</feature>
<feature type="strand" evidence="34">
    <location>
        <begin position="278"/>
        <end position="283"/>
    </location>
</feature>
<feature type="helix" evidence="34">
    <location>
        <begin position="286"/>
        <end position="288"/>
    </location>
</feature>
<feature type="strand" evidence="34">
    <location>
        <begin position="290"/>
        <end position="305"/>
    </location>
</feature>
<feature type="helix" evidence="34">
    <location>
        <begin position="309"/>
        <end position="319"/>
    </location>
</feature>
<feature type="helix" evidence="34">
    <location>
        <begin position="324"/>
        <end position="326"/>
    </location>
</feature>
<feature type="helix" evidence="34">
    <location>
        <begin position="329"/>
        <end position="331"/>
    </location>
</feature>
<feature type="strand" evidence="33">
    <location>
        <begin position="332"/>
        <end position="334"/>
    </location>
</feature>
<feature type="strand" evidence="34">
    <location>
        <begin position="337"/>
        <end position="342"/>
    </location>
</feature>
<feature type="strand" evidence="34">
    <location>
        <begin position="346"/>
        <end position="349"/>
    </location>
</feature>
<feature type="strand" evidence="34">
    <location>
        <begin position="354"/>
        <end position="370"/>
    </location>
</feature>
<feature type="strand" evidence="33">
    <location>
        <begin position="373"/>
        <end position="375"/>
    </location>
</feature>
<feature type="helix" evidence="34">
    <location>
        <begin position="376"/>
        <end position="389"/>
    </location>
</feature>
<feature type="helix" evidence="35">
    <location>
        <begin position="393"/>
        <end position="395"/>
    </location>
</feature>
<feature type="helix" evidence="34">
    <location>
        <begin position="400"/>
        <end position="420"/>
    </location>
</feature>
<feature type="helix" evidence="34">
    <location>
        <begin position="427"/>
        <end position="444"/>
    </location>
</feature>
<feature type="turn" evidence="34">
    <location>
        <begin position="446"/>
        <end position="448"/>
    </location>
</feature>
<feature type="helix" evidence="34">
    <location>
        <begin position="449"/>
        <end position="451"/>
    </location>
</feature>
<feature type="helix" evidence="34">
    <location>
        <begin position="453"/>
        <end position="455"/>
    </location>
</feature>
<feature type="helix" evidence="34">
    <location>
        <begin position="462"/>
        <end position="477"/>
    </location>
</feature>
<feature type="helix" evidence="37">
    <location>
        <begin position="844"/>
        <end position="847"/>
    </location>
</feature>
<reference key="1">
    <citation type="journal article" date="1999" name="DNA Res.">
        <title>Prediction of the coding sequences of unidentified human genes. XIV. The complete sequences of 100 new cDNA clones from brain which code for large proteins in vitro.</title>
        <authorList>
            <person name="Kikuno R."/>
            <person name="Nagase T."/>
            <person name="Ishikawa K."/>
            <person name="Hirosawa M."/>
            <person name="Miyajima N."/>
            <person name="Tanaka A."/>
            <person name="Kotani H."/>
            <person name="Nomura N."/>
            <person name="Ohara O."/>
        </authorList>
    </citation>
    <scope>NUCLEOTIDE SEQUENCE [LARGE SCALE MRNA] (ISOFORM 1)</scope>
    <source>
        <tissue>Brain</tissue>
    </source>
</reference>
<reference key="2">
    <citation type="journal article" date="2002" name="DNA Res.">
        <title>Construction of expression-ready cDNA clones for KIAA genes: manual curation of 330 KIAA cDNA clones.</title>
        <authorList>
            <person name="Nakajima D."/>
            <person name="Okazaki N."/>
            <person name="Yamakawa H."/>
            <person name="Kikuno R."/>
            <person name="Ohara O."/>
            <person name="Nagase T."/>
        </authorList>
    </citation>
    <scope>SEQUENCE REVISION</scope>
</reference>
<reference key="3">
    <citation type="journal article" date="2004" name="Nat. Genet.">
        <title>Complete sequencing and characterization of 21,243 full-length human cDNAs.</title>
        <authorList>
            <person name="Ota T."/>
            <person name="Suzuki Y."/>
            <person name="Nishikawa T."/>
            <person name="Otsuki T."/>
            <person name="Sugiyama T."/>
            <person name="Irie R."/>
            <person name="Wakamatsu A."/>
            <person name="Hayashi K."/>
            <person name="Sato H."/>
            <person name="Nagai K."/>
            <person name="Kimura K."/>
            <person name="Makita H."/>
            <person name="Sekine M."/>
            <person name="Obayashi M."/>
            <person name="Nishi T."/>
            <person name="Shibahara T."/>
            <person name="Tanaka T."/>
            <person name="Ishii S."/>
            <person name="Yamamoto J."/>
            <person name="Saito K."/>
            <person name="Kawai Y."/>
            <person name="Isono Y."/>
            <person name="Nakamura Y."/>
            <person name="Nagahari K."/>
            <person name="Murakami K."/>
            <person name="Yasuda T."/>
            <person name="Iwayanagi T."/>
            <person name="Wagatsuma M."/>
            <person name="Shiratori A."/>
            <person name="Sudo H."/>
            <person name="Hosoiri T."/>
            <person name="Kaku Y."/>
            <person name="Kodaira H."/>
            <person name="Kondo H."/>
            <person name="Sugawara M."/>
            <person name="Takahashi M."/>
            <person name="Kanda K."/>
            <person name="Yokoi T."/>
            <person name="Furuya T."/>
            <person name="Kikkawa E."/>
            <person name="Omura Y."/>
            <person name="Abe K."/>
            <person name="Kamihara K."/>
            <person name="Katsuta N."/>
            <person name="Sato K."/>
            <person name="Tanikawa M."/>
            <person name="Yamazaki M."/>
            <person name="Ninomiya K."/>
            <person name="Ishibashi T."/>
            <person name="Yamashita H."/>
            <person name="Murakawa K."/>
            <person name="Fujimori K."/>
            <person name="Tanai H."/>
            <person name="Kimata M."/>
            <person name="Watanabe M."/>
            <person name="Hiraoka S."/>
            <person name="Chiba Y."/>
            <person name="Ishida S."/>
            <person name="Ono Y."/>
            <person name="Takiguchi S."/>
            <person name="Watanabe S."/>
            <person name="Yosida M."/>
            <person name="Hotuta T."/>
            <person name="Kusano J."/>
            <person name="Kanehori K."/>
            <person name="Takahashi-Fujii A."/>
            <person name="Hara H."/>
            <person name="Tanase T.-O."/>
            <person name="Nomura Y."/>
            <person name="Togiya S."/>
            <person name="Komai F."/>
            <person name="Hara R."/>
            <person name="Takeuchi K."/>
            <person name="Arita M."/>
            <person name="Imose N."/>
            <person name="Musashino K."/>
            <person name="Yuuki H."/>
            <person name="Oshima A."/>
            <person name="Sasaki N."/>
            <person name="Aotsuka S."/>
            <person name="Yoshikawa Y."/>
            <person name="Matsunawa H."/>
            <person name="Ichihara T."/>
            <person name="Shiohata N."/>
            <person name="Sano S."/>
            <person name="Moriya S."/>
            <person name="Momiyama H."/>
            <person name="Satoh N."/>
            <person name="Takami S."/>
            <person name="Terashima Y."/>
            <person name="Suzuki O."/>
            <person name="Nakagawa S."/>
            <person name="Senoh A."/>
            <person name="Mizoguchi H."/>
            <person name="Goto Y."/>
            <person name="Shimizu F."/>
            <person name="Wakebe H."/>
            <person name="Hishigaki H."/>
            <person name="Watanabe T."/>
            <person name="Sugiyama A."/>
            <person name="Takemoto M."/>
            <person name="Kawakami B."/>
            <person name="Yamazaki M."/>
            <person name="Watanabe K."/>
            <person name="Kumagai A."/>
            <person name="Itakura S."/>
            <person name="Fukuzumi Y."/>
            <person name="Fujimori Y."/>
            <person name="Komiyama M."/>
            <person name="Tashiro H."/>
            <person name="Tanigami A."/>
            <person name="Fujiwara T."/>
            <person name="Ono T."/>
            <person name="Yamada K."/>
            <person name="Fujii Y."/>
            <person name="Ozaki K."/>
            <person name="Hirao M."/>
            <person name="Ohmori Y."/>
            <person name="Kawabata A."/>
            <person name="Hikiji T."/>
            <person name="Kobatake N."/>
            <person name="Inagaki H."/>
            <person name="Ikema Y."/>
            <person name="Okamoto S."/>
            <person name="Okitani R."/>
            <person name="Kawakami T."/>
            <person name="Noguchi S."/>
            <person name="Itoh T."/>
            <person name="Shigeta K."/>
            <person name="Senba T."/>
            <person name="Matsumura K."/>
            <person name="Nakajima Y."/>
            <person name="Mizuno T."/>
            <person name="Morinaga M."/>
            <person name="Sasaki M."/>
            <person name="Togashi T."/>
            <person name="Oyama M."/>
            <person name="Hata H."/>
            <person name="Watanabe M."/>
            <person name="Komatsu T."/>
            <person name="Mizushima-Sugano J."/>
            <person name="Satoh T."/>
            <person name="Shirai Y."/>
            <person name="Takahashi Y."/>
            <person name="Nakagawa K."/>
            <person name="Okumura K."/>
            <person name="Nagase T."/>
            <person name="Nomura N."/>
            <person name="Kikuchi H."/>
            <person name="Masuho Y."/>
            <person name="Yamashita R."/>
            <person name="Nakai K."/>
            <person name="Yada T."/>
            <person name="Nakamura Y."/>
            <person name="Ohara O."/>
            <person name="Isogai T."/>
            <person name="Sugano S."/>
        </authorList>
    </citation>
    <scope>NUCLEOTIDE SEQUENCE [LARGE SCALE MRNA] (ISOFORM 4)</scope>
    <scope>NUCLEOTIDE SEQUENCE [LARGE SCALE MRNA] OF 34-927 (ISOFORM 3)</scope>
    <scope>NUCLEOTIDE SEQUENCE [LARGE SCALE MRNA] OF 515-1060 (ISOFORM 1)</scope>
    <source>
        <tissue>Embryo</tissue>
        <tissue>Teratocarcinoma</tissue>
        <tissue>Trachea</tissue>
    </source>
</reference>
<reference key="4">
    <citation type="journal article" date="2007" name="BMC Genomics">
        <title>The full-ORF clone resource of the German cDNA consortium.</title>
        <authorList>
            <person name="Bechtel S."/>
            <person name="Rosenfelder H."/>
            <person name="Duda A."/>
            <person name="Schmidt C.P."/>
            <person name="Ernst U."/>
            <person name="Wellenreuther R."/>
            <person name="Mehrle A."/>
            <person name="Schuster C."/>
            <person name="Bahr A."/>
            <person name="Bloecker H."/>
            <person name="Heubner D."/>
            <person name="Hoerlein A."/>
            <person name="Michel G."/>
            <person name="Wedler H."/>
            <person name="Koehrer K."/>
            <person name="Ottenwaelder B."/>
            <person name="Poustka A."/>
            <person name="Wiemann S."/>
            <person name="Schupp I."/>
        </authorList>
    </citation>
    <scope>NUCLEOTIDE SEQUENCE [LARGE SCALE MRNA] (ISOFORM 2)</scope>
    <source>
        <tissue>Endometrial tumor</tissue>
    </source>
</reference>
<reference key="5">
    <citation type="journal article" date="2005" name="Nature">
        <title>The DNA sequence of the human X chromosome.</title>
        <authorList>
            <person name="Ross M.T."/>
            <person name="Grafham D.V."/>
            <person name="Coffey A.J."/>
            <person name="Scherer S."/>
            <person name="McLay K."/>
            <person name="Muzny D."/>
            <person name="Platzer M."/>
            <person name="Howell G.R."/>
            <person name="Burrows C."/>
            <person name="Bird C.P."/>
            <person name="Frankish A."/>
            <person name="Lovell F.L."/>
            <person name="Howe K.L."/>
            <person name="Ashurst J.L."/>
            <person name="Fulton R.S."/>
            <person name="Sudbrak R."/>
            <person name="Wen G."/>
            <person name="Jones M.C."/>
            <person name="Hurles M.E."/>
            <person name="Andrews T.D."/>
            <person name="Scott C.E."/>
            <person name="Searle S."/>
            <person name="Ramser J."/>
            <person name="Whittaker A."/>
            <person name="Deadman R."/>
            <person name="Carter N.P."/>
            <person name="Hunt S.E."/>
            <person name="Chen R."/>
            <person name="Cree A."/>
            <person name="Gunaratne P."/>
            <person name="Havlak P."/>
            <person name="Hodgson A."/>
            <person name="Metzker M.L."/>
            <person name="Richards S."/>
            <person name="Scott G."/>
            <person name="Steffen D."/>
            <person name="Sodergren E."/>
            <person name="Wheeler D.A."/>
            <person name="Worley K.C."/>
            <person name="Ainscough R."/>
            <person name="Ambrose K.D."/>
            <person name="Ansari-Lari M.A."/>
            <person name="Aradhya S."/>
            <person name="Ashwell R.I."/>
            <person name="Babbage A.K."/>
            <person name="Bagguley C.L."/>
            <person name="Ballabio A."/>
            <person name="Banerjee R."/>
            <person name="Barker G.E."/>
            <person name="Barlow K.F."/>
            <person name="Barrett I.P."/>
            <person name="Bates K.N."/>
            <person name="Beare D.M."/>
            <person name="Beasley H."/>
            <person name="Beasley O."/>
            <person name="Beck A."/>
            <person name="Bethel G."/>
            <person name="Blechschmidt K."/>
            <person name="Brady N."/>
            <person name="Bray-Allen S."/>
            <person name="Bridgeman A.M."/>
            <person name="Brown A.J."/>
            <person name="Brown M.J."/>
            <person name="Bonnin D."/>
            <person name="Bruford E.A."/>
            <person name="Buhay C."/>
            <person name="Burch P."/>
            <person name="Burford D."/>
            <person name="Burgess J."/>
            <person name="Burrill W."/>
            <person name="Burton J."/>
            <person name="Bye J.M."/>
            <person name="Carder C."/>
            <person name="Carrel L."/>
            <person name="Chako J."/>
            <person name="Chapman J.C."/>
            <person name="Chavez D."/>
            <person name="Chen E."/>
            <person name="Chen G."/>
            <person name="Chen Y."/>
            <person name="Chen Z."/>
            <person name="Chinault C."/>
            <person name="Ciccodicola A."/>
            <person name="Clark S.Y."/>
            <person name="Clarke G."/>
            <person name="Clee C.M."/>
            <person name="Clegg S."/>
            <person name="Clerc-Blankenburg K."/>
            <person name="Clifford K."/>
            <person name="Cobley V."/>
            <person name="Cole C.G."/>
            <person name="Conquer J.S."/>
            <person name="Corby N."/>
            <person name="Connor R.E."/>
            <person name="David R."/>
            <person name="Davies J."/>
            <person name="Davis C."/>
            <person name="Davis J."/>
            <person name="Delgado O."/>
            <person name="Deshazo D."/>
            <person name="Dhami P."/>
            <person name="Ding Y."/>
            <person name="Dinh H."/>
            <person name="Dodsworth S."/>
            <person name="Draper H."/>
            <person name="Dugan-Rocha S."/>
            <person name="Dunham A."/>
            <person name="Dunn M."/>
            <person name="Durbin K.J."/>
            <person name="Dutta I."/>
            <person name="Eades T."/>
            <person name="Ellwood M."/>
            <person name="Emery-Cohen A."/>
            <person name="Errington H."/>
            <person name="Evans K.L."/>
            <person name="Faulkner L."/>
            <person name="Francis F."/>
            <person name="Frankland J."/>
            <person name="Fraser A.E."/>
            <person name="Galgoczy P."/>
            <person name="Gilbert J."/>
            <person name="Gill R."/>
            <person name="Gloeckner G."/>
            <person name="Gregory S.G."/>
            <person name="Gribble S."/>
            <person name="Griffiths C."/>
            <person name="Grocock R."/>
            <person name="Gu Y."/>
            <person name="Gwilliam R."/>
            <person name="Hamilton C."/>
            <person name="Hart E.A."/>
            <person name="Hawes A."/>
            <person name="Heath P.D."/>
            <person name="Heitmann K."/>
            <person name="Hennig S."/>
            <person name="Hernandez J."/>
            <person name="Hinzmann B."/>
            <person name="Ho S."/>
            <person name="Hoffs M."/>
            <person name="Howden P.J."/>
            <person name="Huckle E.J."/>
            <person name="Hume J."/>
            <person name="Hunt P.J."/>
            <person name="Hunt A.R."/>
            <person name="Isherwood J."/>
            <person name="Jacob L."/>
            <person name="Johnson D."/>
            <person name="Jones S."/>
            <person name="de Jong P.J."/>
            <person name="Joseph S.S."/>
            <person name="Keenan S."/>
            <person name="Kelly S."/>
            <person name="Kershaw J.K."/>
            <person name="Khan Z."/>
            <person name="Kioschis P."/>
            <person name="Klages S."/>
            <person name="Knights A.J."/>
            <person name="Kosiura A."/>
            <person name="Kovar-Smith C."/>
            <person name="Laird G.K."/>
            <person name="Langford C."/>
            <person name="Lawlor S."/>
            <person name="Leversha M."/>
            <person name="Lewis L."/>
            <person name="Liu W."/>
            <person name="Lloyd C."/>
            <person name="Lloyd D.M."/>
            <person name="Loulseged H."/>
            <person name="Loveland J.E."/>
            <person name="Lovell J.D."/>
            <person name="Lozado R."/>
            <person name="Lu J."/>
            <person name="Lyne R."/>
            <person name="Ma J."/>
            <person name="Maheshwari M."/>
            <person name="Matthews L.H."/>
            <person name="McDowall J."/>
            <person name="McLaren S."/>
            <person name="McMurray A."/>
            <person name="Meidl P."/>
            <person name="Meitinger T."/>
            <person name="Milne S."/>
            <person name="Miner G."/>
            <person name="Mistry S.L."/>
            <person name="Morgan M."/>
            <person name="Morris S."/>
            <person name="Mueller I."/>
            <person name="Mullikin J.C."/>
            <person name="Nguyen N."/>
            <person name="Nordsiek G."/>
            <person name="Nyakatura G."/>
            <person name="O'dell C.N."/>
            <person name="Okwuonu G."/>
            <person name="Palmer S."/>
            <person name="Pandian R."/>
            <person name="Parker D."/>
            <person name="Parrish J."/>
            <person name="Pasternak S."/>
            <person name="Patel D."/>
            <person name="Pearce A.V."/>
            <person name="Pearson D.M."/>
            <person name="Pelan S.E."/>
            <person name="Perez L."/>
            <person name="Porter K.M."/>
            <person name="Ramsey Y."/>
            <person name="Reichwald K."/>
            <person name="Rhodes S."/>
            <person name="Ridler K.A."/>
            <person name="Schlessinger D."/>
            <person name="Schueler M.G."/>
            <person name="Sehra H.K."/>
            <person name="Shaw-Smith C."/>
            <person name="Shen H."/>
            <person name="Sheridan E.M."/>
            <person name="Shownkeen R."/>
            <person name="Skuce C.D."/>
            <person name="Smith M.L."/>
            <person name="Sotheran E.C."/>
            <person name="Steingruber H.E."/>
            <person name="Steward C.A."/>
            <person name="Storey R."/>
            <person name="Swann R.M."/>
            <person name="Swarbreck D."/>
            <person name="Tabor P.E."/>
            <person name="Taudien S."/>
            <person name="Taylor T."/>
            <person name="Teague B."/>
            <person name="Thomas K."/>
            <person name="Thorpe A."/>
            <person name="Timms K."/>
            <person name="Tracey A."/>
            <person name="Trevanion S."/>
            <person name="Tromans A.C."/>
            <person name="d'Urso M."/>
            <person name="Verduzco D."/>
            <person name="Villasana D."/>
            <person name="Waldron L."/>
            <person name="Wall M."/>
            <person name="Wang Q."/>
            <person name="Warren J."/>
            <person name="Warry G.L."/>
            <person name="Wei X."/>
            <person name="West A."/>
            <person name="Whitehead S.L."/>
            <person name="Whiteley M.N."/>
            <person name="Wilkinson J.E."/>
            <person name="Willey D.L."/>
            <person name="Williams G."/>
            <person name="Williams L."/>
            <person name="Williamson A."/>
            <person name="Williamson H."/>
            <person name="Wilming L."/>
            <person name="Woodmansey R.L."/>
            <person name="Wray P.W."/>
            <person name="Yen J."/>
            <person name="Zhang J."/>
            <person name="Zhou J."/>
            <person name="Zoghbi H."/>
            <person name="Zorilla S."/>
            <person name="Buck D."/>
            <person name="Reinhardt R."/>
            <person name="Poustka A."/>
            <person name="Rosenthal A."/>
            <person name="Lehrach H."/>
            <person name="Meindl A."/>
            <person name="Minx P.J."/>
            <person name="Hillier L.W."/>
            <person name="Willard H.F."/>
            <person name="Wilson R.K."/>
            <person name="Waterston R.H."/>
            <person name="Rice C.M."/>
            <person name="Vaudin M."/>
            <person name="Coulson A."/>
            <person name="Nelson D.L."/>
            <person name="Weinstock G."/>
            <person name="Sulston J.E."/>
            <person name="Durbin R.M."/>
            <person name="Hubbard T."/>
            <person name="Gibbs R.A."/>
            <person name="Beck S."/>
            <person name="Rogers J."/>
            <person name="Bentley D.R."/>
        </authorList>
    </citation>
    <scope>NUCLEOTIDE SEQUENCE [LARGE SCALE GENOMIC DNA]</scope>
</reference>
<reference key="6">
    <citation type="journal article" date="2004" name="Genome Res.">
        <title>The status, quality, and expansion of the NIH full-length cDNA project: the Mammalian Gene Collection (MGC).</title>
        <authorList>
            <consortium name="The MGC Project Team"/>
        </authorList>
    </citation>
    <scope>NUCLEOTIDE SEQUENCE [LARGE SCALE MRNA] (ISOFORMS 2 AND 5)</scope>
    <source>
        <tissue>Brain</tissue>
        <tissue>Cervix</tissue>
    </source>
</reference>
<reference key="7">
    <citation type="journal article" date="2005" name="J. Med. Genet.">
        <title>Mutations in PHF8 are associated with X linked mental retardation and cleft lip/cleft palate.</title>
        <authorList>
            <person name="Laumonnier F."/>
            <person name="Holbert S."/>
            <person name="Ronce N."/>
            <person name="Faravelli F."/>
            <person name="Lenzner S."/>
            <person name="Schwartz C.E."/>
            <person name="Lespinasse J."/>
            <person name="Van Esch H."/>
            <person name="Lacombe D."/>
            <person name="Goizet C."/>
            <person name="Phan-Dinh Tuy F."/>
            <person name="van Bokhoven H."/>
            <person name="Fryns J.-P."/>
            <person name="Chelly J."/>
            <person name="Ropers H.-H."/>
            <person name="Moraine C."/>
            <person name="Hamel B.C.J."/>
            <person name="Briault S."/>
        </authorList>
    </citation>
    <scope>INVOLVEMENT IN MRXSSD</scope>
</reference>
<reference key="8">
    <citation type="journal article" date="2006" name="Cell">
        <title>Global, in vivo, and site-specific phosphorylation dynamics in signaling networks.</title>
        <authorList>
            <person name="Olsen J.V."/>
            <person name="Blagoev B."/>
            <person name="Gnad F."/>
            <person name="Macek B."/>
            <person name="Kumar C."/>
            <person name="Mortensen P."/>
            <person name="Mann M."/>
        </authorList>
    </citation>
    <scope>PHOSPHORYLATION [LARGE SCALE ANALYSIS] AT SER-857</scope>
    <scope>IDENTIFICATION BY MASS SPECTROMETRY [LARGE SCALE ANALYSIS]</scope>
    <source>
        <tissue>Cervix carcinoma</tissue>
    </source>
</reference>
<reference key="9">
    <citation type="journal article" date="2008" name="Proc. Natl. Acad. Sci. U.S.A.">
        <title>A quantitative atlas of mitotic phosphorylation.</title>
        <authorList>
            <person name="Dephoure N."/>
            <person name="Zhou C."/>
            <person name="Villen J."/>
            <person name="Beausoleil S.A."/>
            <person name="Bakalarski C.E."/>
            <person name="Elledge S.J."/>
            <person name="Gygi S.P."/>
        </authorList>
    </citation>
    <scope>PHOSPHORYLATION [LARGE SCALE ANALYSIS] AT THR-705; THR-706; SER-854; SER-857 AND SER-880</scope>
    <scope>IDENTIFICATION BY MASS SPECTROMETRY [LARGE SCALE ANALYSIS]</scope>
    <source>
        <tissue>Cervix carcinoma</tissue>
    </source>
</reference>
<reference key="10">
    <citation type="journal article" date="2009" name="Anal. Chem.">
        <title>Lys-N and trypsin cover complementary parts of the phosphoproteome in a refined SCX-based approach.</title>
        <authorList>
            <person name="Gauci S."/>
            <person name="Helbig A.O."/>
            <person name="Slijper M."/>
            <person name="Krijgsveld J."/>
            <person name="Heck A.J."/>
            <person name="Mohammed S."/>
        </authorList>
    </citation>
    <scope>IDENTIFICATION BY MASS SPECTROMETRY [LARGE SCALE ANALYSIS]</scope>
</reference>
<reference key="11">
    <citation type="journal article" date="2009" name="Sci. Signal.">
        <title>Quantitative phosphoproteomic analysis of T cell receptor signaling reveals system-wide modulation of protein-protein interactions.</title>
        <authorList>
            <person name="Mayya V."/>
            <person name="Lundgren D.H."/>
            <person name="Hwang S.-I."/>
            <person name="Rezaul K."/>
            <person name="Wu L."/>
            <person name="Eng J.K."/>
            <person name="Rodionov V."/>
            <person name="Han D.K."/>
        </authorList>
    </citation>
    <scope>PHOSPHORYLATION [LARGE SCALE ANALYSIS] AT SER-651; THR-705; THR-706; SER-854 AND SER-857</scope>
    <scope>IDENTIFICATION BY MASS SPECTROMETRY [LARGE SCALE ANALYSIS]</scope>
    <source>
        <tissue>Leukemic T-cell</tissue>
    </source>
</reference>
<reference key="12">
    <citation type="journal article" date="2010" name="Cell Res.">
        <title>PHF8 is a histone H3K9me2 demethylase regulating rRNA synthesis.</title>
        <authorList>
            <person name="Zhu Z."/>
            <person name="Wang Y."/>
            <person name="Li X."/>
            <person name="Wang Y."/>
            <person name="Xu L."/>
            <person name="Wang X."/>
            <person name="Sun T."/>
            <person name="Dong X."/>
            <person name="Chen L."/>
            <person name="Mao H."/>
            <person name="Yu Y."/>
            <person name="Li J."/>
            <person name="Chen P.A."/>
            <person name="Chen C.D."/>
        </authorList>
    </citation>
    <scope>FUNCTION</scope>
    <scope>SUBCELLULAR LOCATION</scope>
    <scope>MUTAGENESIS OF HIS-283</scope>
</reference>
<reference key="13">
    <citation type="journal article" date="2010" name="Cell Res.">
        <title>The X-linked mental retardation gene PHF8 is a histone demethylase involved in neuronal differentiation.</title>
        <authorList>
            <person name="Qiu J."/>
            <person name="Shi G."/>
            <person name="Jia Y."/>
            <person name="Li J."/>
            <person name="Wu M."/>
            <person name="Li J."/>
            <person name="Dong S."/>
            <person name="Wong J."/>
        </authorList>
    </citation>
    <scope>FUNCTION</scope>
    <scope>CHARACTERIZATION OF VARIANT MRXSSD SER-315</scope>
</reference>
<reference key="14">
    <citation type="journal article" date="2010" name="Hum. Mol. Genet.">
        <title>PHF8, a gene associated with cleft lip/palate and mental retardation, encodes for an Nepsilon-dimethyl lysine demethylase.</title>
        <authorList>
            <person name="Loenarz C."/>
            <person name="Ge W."/>
            <person name="Coleman M.L."/>
            <person name="Rose N.R."/>
            <person name="Cooper C.D.O."/>
            <person name="Klose R.J."/>
            <person name="Ratcliffe P.J."/>
            <person name="Schofield C.J."/>
        </authorList>
    </citation>
    <scope>FUNCTION</scope>
    <scope>CATALYTIC ACTIVITY</scope>
    <scope>COFACTOR</scope>
    <scope>SUBCELLULAR LOCATION</scope>
</reference>
<reference key="15">
    <citation type="journal article" date="2010" name="Mol. Cell">
        <title>A functional link between the histone demethylase PHF8 and the transcription factor ZNF711 in X-linked mental retardation.</title>
        <authorList>
            <person name="Kleine-Kohlbrecher D."/>
            <person name="Christensen J."/>
            <person name="Vandamme J."/>
            <person name="Abarrategui I."/>
            <person name="Bak M."/>
            <person name="Tommerup N."/>
            <person name="Shi X."/>
            <person name="Gozani O."/>
            <person name="Rappsilber J."/>
            <person name="Salcini A.E."/>
            <person name="Helin K."/>
        </authorList>
    </citation>
    <scope>FUNCTION</scope>
    <scope>DOMAIN PHD-FINGER</scope>
    <scope>INTERACTION WITH ZNF711</scope>
    <scope>CHARACTERIZATION OF VARIANT MRXSSD SER-315</scope>
    <scope>MUTAGENESIS OF HIS-283</scope>
</reference>
<reference key="16">
    <citation type="journal article" date="2010" name="Mol. Cell. Biol.">
        <title>PHF8 targets histone methylation and RNA polymerase II to activate transcription.</title>
        <authorList>
            <person name="Fortschegger K."/>
            <person name="de Graaf P."/>
            <person name="Outchkourov N.S."/>
            <person name="van Schaik F.M."/>
            <person name="Timmers H.T."/>
            <person name="Shiekhattar R."/>
        </authorList>
    </citation>
    <scope>FUNCTION</scope>
    <scope>DOMAIN PHD-FINGER</scope>
    <scope>CHARACTERIZATION OF VARIANT MRXSSD SER-315</scope>
</reference>
<reference key="17">
    <citation type="journal article" date="2010" name="Nat. Struct. Mol. Biol.">
        <title>PHF8 activates transcription of rRNA genes through H3K4me3 binding and H3K9me1/2 demethylation.</title>
        <authorList>
            <person name="Feng W."/>
            <person name="Yonezawa M."/>
            <person name="Ye J."/>
            <person name="Jenuwein T."/>
            <person name="Grummt I."/>
        </authorList>
    </citation>
    <scope>FUNCTION</scope>
    <scope>CATALYTIC ACTIVITY</scope>
    <scope>SUBCELLULAR LOCATION</scope>
    <scope>INTERACTION WITH POLR1B AND UBTF</scope>
    <scope>CHARACTERIZATION OF VARIANT MRXSSD SER-315</scope>
    <scope>MUTAGENESIS OF TYR-43 AND 283-HIS--ASP-285</scope>
</reference>
<reference key="18">
    <citation type="journal article" date="2010" name="Nature">
        <title>Histone H4K20/H3K9 demethylase PHF8 regulates zebrafish brain and craniofacial development.</title>
        <authorList>
            <person name="Qi H.H."/>
            <person name="Sarkissian M."/>
            <person name="Hu G.Q."/>
            <person name="Wang Z."/>
            <person name="Bhattacharjee A."/>
            <person name="Gordon D.B."/>
            <person name="Gonzales M."/>
            <person name="Lan F."/>
            <person name="Ongusaha P.P."/>
            <person name="Huarte M."/>
            <person name="Yaghi N.K."/>
            <person name="Lim H."/>
            <person name="Garcia B.A."/>
            <person name="Brizuela L."/>
            <person name="Zhao K."/>
            <person name="Roberts T.M."/>
            <person name="Shi Y."/>
        </authorList>
    </citation>
    <scope>FUNCTION</scope>
    <scope>DOMAIN PHD-FINGER</scope>
    <scope>CHARACTERIZATION OF VARIANT MRXSSD SER-315</scope>
    <scope>MUTAGENESIS OF TYR-43; TYR-50 AND TRP-65</scope>
</reference>
<reference key="19">
    <citation type="journal article" date="2010" name="Nature">
        <title>PHF8 mediates histone H4 lysine 20 demethylation events involved in cell cycle progression.</title>
        <authorList>
            <person name="Liu W."/>
            <person name="Tanasa B."/>
            <person name="Tyurina O.V."/>
            <person name="Zhou T.Y."/>
            <person name="Gassmann R."/>
            <person name="Liu W.T."/>
            <person name="Ohgi K.A."/>
            <person name="Benner C."/>
            <person name="Garcia-Bassets I."/>
            <person name="Aggarwal A.K."/>
            <person name="Desai A."/>
            <person name="Dorrestein P.C."/>
            <person name="Glass C.K."/>
            <person name="Rosenfeld M.G."/>
        </authorList>
    </citation>
    <scope>FUNCTION</scope>
    <scope>SUBCELLULAR LOCATION</scope>
    <scope>DOMAIN PHD-FINGER</scope>
    <scope>INTERACTION WITH SETD1A; HCFC1 AND E2F1</scope>
    <scope>CHARACTERIZATION OF VARIANT MRXSSD SER-315</scope>
    <scope>PHOSPHORYLATION AT SER-69 AND SER-120</scope>
    <scope>MUTAGENESIS OF SER-69; SER-120 AND HIS-283</scope>
</reference>
<reference key="20">
    <citation type="journal article" date="2010" name="Sci. Signal.">
        <title>Quantitative phosphoproteomics reveals widespread full phosphorylation site occupancy during mitosis.</title>
        <authorList>
            <person name="Olsen J.V."/>
            <person name="Vermeulen M."/>
            <person name="Santamaria A."/>
            <person name="Kumar C."/>
            <person name="Miller M.L."/>
            <person name="Jensen L.J."/>
            <person name="Gnad F."/>
            <person name="Cox J."/>
            <person name="Jensen T.S."/>
            <person name="Nigg E.A."/>
            <person name="Brunak S."/>
            <person name="Mann M."/>
        </authorList>
    </citation>
    <scope>PHOSPHORYLATION [LARGE SCALE ANALYSIS] AT SER-804; SER-857 AND SER-880</scope>
    <scope>IDENTIFICATION BY MASS SPECTROMETRY [LARGE SCALE ANALYSIS]</scope>
    <source>
        <tissue>Cervix carcinoma</tissue>
    </source>
</reference>
<reference key="21">
    <citation type="journal article" date="2011" name="BMC Syst. Biol.">
        <title>Initial characterization of the human central proteome.</title>
        <authorList>
            <person name="Burkard T.R."/>
            <person name="Planyavsky M."/>
            <person name="Kaupe I."/>
            <person name="Breitwieser F.P."/>
            <person name="Buerckstuemmer T."/>
            <person name="Bennett K.L."/>
            <person name="Superti-Furga G."/>
            <person name="Colinge J."/>
        </authorList>
    </citation>
    <scope>IDENTIFICATION BY MASS SPECTROMETRY [LARGE SCALE ANALYSIS]</scope>
</reference>
<reference key="22">
    <citation type="journal article" date="2011" name="Sci. Signal.">
        <title>System-wide temporal characterization of the proteome and phosphoproteome of human embryonic stem cell differentiation.</title>
        <authorList>
            <person name="Rigbolt K.T."/>
            <person name="Prokhorova T.A."/>
            <person name="Akimov V."/>
            <person name="Henningsen J."/>
            <person name="Johansen P.T."/>
            <person name="Kratchmarova I."/>
            <person name="Kassem M."/>
            <person name="Mann M."/>
            <person name="Olsen J.V."/>
            <person name="Blagoev B."/>
        </authorList>
    </citation>
    <scope>PHOSPHORYLATION [LARGE SCALE ANALYSIS] AT SER-854; SER-857 AND SER-880</scope>
    <scope>IDENTIFICATION BY MASS SPECTROMETRY [LARGE SCALE ANALYSIS]</scope>
</reference>
<reference key="23">
    <citation type="journal article" date="2013" name="J. Proteome Res.">
        <title>Toward a comprehensive characterization of a human cancer cell phosphoproteome.</title>
        <authorList>
            <person name="Zhou H."/>
            <person name="Di Palma S."/>
            <person name="Preisinger C."/>
            <person name="Peng M."/>
            <person name="Polat A.N."/>
            <person name="Heck A.J."/>
            <person name="Mohammed S."/>
        </authorList>
    </citation>
    <scope>PHOSPHORYLATION [LARGE SCALE ANALYSIS] AT SER-120; SER-722; SER-804; SER-857 AND SER-880</scope>
    <scope>IDENTIFICATION BY MASS SPECTROMETRY [LARGE SCALE ANALYSIS]</scope>
    <source>
        <tissue>Cervix carcinoma</tissue>
        <tissue>Erythroleukemia</tissue>
    </source>
</reference>
<reference key="24">
    <citation type="journal article" date="2019" name="Hum. Mol. Genet.">
        <title>Histone demethylase KDM5C is a SAHA-sensitive central hub at the crossroads of transcriptional axes involved in multiple neurodevelopmental disorders.</title>
        <authorList>
            <person name="Poeta L."/>
            <person name="Padula A."/>
            <person name="Attianese B."/>
            <person name="Valentino M."/>
            <person name="Verrillo L."/>
            <person name="Filosa S."/>
            <person name="Shoubridge C."/>
            <person name="Barra A."/>
            <person name="Schwartz C.E."/>
            <person name="Christensen J."/>
            <person name="van Bokhoven H."/>
            <person name="Helin K."/>
            <person name="Lioi M.B."/>
            <person name="Collombat P."/>
            <person name="Gecz J."/>
            <person name="Altucci L."/>
            <person name="Di Schiavi E."/>
            <person name="Miano M.G."/>
        </authorList>
    </citation>
    <scope>FUNCTION</scope>
    <scope>CHARACTERIZATION OF VARIANT MRXSSD SER-315</scope>
    <scope>MUTAGENESIS OF ARG-943</scope>
</reference>
<reference key="25">
    <citation type="journal article" date="2020" name="Oncogene">
        <title>The EGFR-ZNF263 signaling axis silences SIX3 in glioblastoma epigenetically.</title>
        <authorList>
            <person name="Yu Z."/>
            <person name="Feng J."/>
            <person name="Wang W."/>
            <person name="Deng Z."/>
            <person name="Zhang Y."/>
            <person name="Xiao L."/>
            <person name="Wang Z."/>
            <person name="Liu C."/>
            <person name="Liu Q."/>
            <person name="Chen S."/>
            <person name="Wu M."/>
        </authorList>
    </citation>
    <scope>INTERACTION WITH ZNF263</scope>
</reference>
<reference key="26">
    <citation type="journal article" date="2010" name="Cell Res.">
        <title>Structural insights into a novel histone demethylase PHF8.</title>
        <authorList>
            <person name="Yu L."/>
            <person name="Wang Y."/>
            <person name="Huang S."/>
            <person name="Wang J."/>
            <person name="Deng Z."/>
            <person name="Zhang Q."/>
            <person name="Wu W."/>
            <person name="Zhang X."/>
            <person name="Liu Z."/>
            <person name="Gong W."/>
            <person name="Chen Z."/>
        </authorList>
    </citation>
    <scope>X-RAY CRYSTALLOGRAPHY (2.4 ANGSTROMS) OF 122-483 IN COMPLEX WITH IRON AND ALPHA-KETOGLUTARATE</scope>
    <scope>FUNCTION</scope>
    <scope>CHARACTERIZATION OF VARIANT MRXSSD SER-315</scope>
</reference>
<reference key="27">
    <citation type="journal article" date="2010" name="FEBS Lett.">
        <title>Crystal structure of the PHF8 Jumonji domain, an N(epsilon)-methyl lysine demethylase.</title>
        <authorList>
            <person name="Yue W.W."/>
            <person name="Hozjan V."/>
            <person name="Ge W."/>
            <person name="Loenarz C."/>
            <person name="Cooper C.D."/>
            <person name="Schofield C.J."/>
            <person name="Kavanagh K.L."/>
            <person name="Oppermann U."/>
            <person name="McDonough M.A."/>
        </authorList>
    </citation>
    <scope>X-RAY CRYSTALLOGRAPHY (2.15 ANGSTROMS) OF 115-483</scope>
</reference>
<reference key="28">
    <citation type="journal article" date="2010" name="Nat. Struct. Mol. Biol.">
        <title>Enzymatic and structural insights for substrate specificity of a family of jumonji histone lysine demethylases.</title>
        <authorList>
            <person name="Horton J.R."/>
            <person name="Upadhyay A.K."/>
            <person name="Qi H.H."/>
            <person name="Zhang X."/>
            <person name="Shi Y."/>
            <person name="Cheng X."/>
        </authorList>
    </citation>
    <scope>X-RAY CRYSTALLOGRAPHY (2.2 ANGSTROMS) OF 1-447 IN COMPLEX WITH IRON AND N-OXALYLGLYCINE</scope>
    <scope>ZINC-BINDING</scope>
    <scope>FUNCTION</scope>
    <scope>CATALYTIC ACTIVITY</scope>
    <scope>BIOPHYSICOCHEMICAL PROPERTIES</scope>
    <scope>COFACTOR</scope>
    <scope>DOMAIN LINKER AND PHD-FINGER</scope>
</reference>
<reference key="29">
    <citation type="journal article" date="2007" name="Clin. Genet.">
        <title>Screening of mutations in the PHF8 gene and identification of a novel mutation in a Finnish family with XLMR and cleft lip/cleft palate.</title>
        <authorList>
            <person name="Koivisto A.M."/>
            <person name="Ala-Mello S."/>
            <person name="Lemmelae S."/>
            <person name="Komu H.A."/>
            <person name="Rautio J."/>
            <person name="Jaervelae I."/>
        </authorList>
    </citation>
    <scope>VARIANT MRXSSD SER-315</scope>
</reference>
<reference key="30">
    <citation type="journal article" date="2012" name="Transl. Psychiatry">
        <title>Analysis of the chromosome X exome in patients with autism spectrum disorders identified novel candidate genes, including TMLHE.</title>
        <authorList>
            <person name="Nava C."/>
            <person name="Lamari F."/>
            <person name="Heron D."/>
            <person name="Mignot C."/>
            <person name="Rastetter A."/>
            <person name="Keren B."/>
            <person name="Cohen D."/>
            <person name="Faudet A."/>
            <person name="Bouteiller D."/>
            <person name="Gilleron M."/>
            <person name="Jacquette A."/>
            <person name="Whalen S."/>
            <person name="Afenjar A."/>
            <person name="Perisse D."/>
            <person name="Laurent C."/>
            <person name="Dupuits C."/>
            <person name="Gautier C."/>
            <person name="Gerard M."/>
            <person name="Huguet G."/>
            <person name="Caillet S."/>
            <person name="Leheup B."/>
            <person name="Leboyer M."/>
            <person name="Gillberg C."/>
            <person name="Delorme R."/>
            <person name="Bourgeron T."/>
            <person name="Brice A."/>
            <person name="Depienne C."/>
        </authorList>
    </citation>
    <scope>VARIANT SER-969 DEL</scope>
</reference>
<name>PHF8_HUMAN</name>
<dbReference type="EC" id="1.14.11.27" evidence="7 8"/>
<dbReference type="EC" id="1.14.11.65" evidence="10"/>
<dbReference type="EMBL" id="AB029034">
    <property type="protein sequence ID" value="BAA83063.1"/>
    <property type="status" value="ALT_INIT"/>
    <property type="molecule type" value="mRNA"/>
</dbReference>
<dbReference type="EMBL" id="CR933612">
    <property type="protein sequence ID" value="CAI45929.1"/>
    <property type="status" value="ALT_SEQ"/>
    <property type="molecule type" value="mRNA"/>
</dbReference>
<dbReference type="EMBL" id="AK021696">
    <property type="protein sequence ID" value="BAB13877.1"/>
    <property type="status" value="ALT_INIT"/>
    <property type="molecule type" value="mRNA"/>
</dbReference>
<dbReference type="EMBL" id="AK022788">
    <property type="protein sequence ID" value="BAG51116.1"/>
    <property type="molecule type" value="mRNA"/>
</dbReference>
<dbReference type="EMBL" id="AK304272">
    <property type="protein sequence ID" value="BAH14147.1"/>
    <property type="molecule type" value="mRNA"/>
</dbReference>
<dbReference type="EMBL" id="AL589872">
    <property type="status" value="NOT_ANNOTATED_CDS"/>
    <property type="molecule type" value="Genomic_DNA"/>
</dbReference>
<dbReference type="EMBL" id="AL732374">
    <property type="status" value="NOT_ANNOTATED_CDS"/>
    <property type="molecule type" value="Genomic_DNA"/>
</dbReference>
<dbReference type="EMBL" id="Z98051">
    <property type="status" value="NOT_ANNOTATED_CDS"/>
    <property type="molecule type" value="Genomic_DNA"/>
</dbReference>
<dbReference type="EMBL" id="BC042108">
    <property type="status" value="NOT_ANNOTATED_CDS"/>
    <property type="molecule type" value="mRNA"/>
</dbReference>
<dbReference type="EMBL" id="BC053861">
    <property type="protein sequence ID" value="AAH53861.1"/>
    <property type="molecule type" value="mRNA"/>
</dbReference>
<dbReference type="CCDS" id="CCDS14355.1">
    <molecule id="Q9UPP1-2"/>
</dbReference>
<dbReference type="CCDS" id="CCDS55419.1">
    <molecule id="Q9UPP1-5"/>
</dbReference>
<dbReference type="CCDS" id="CCDS55420.1">
    <molecule id="Q9UPP1-1"/>
</dbReference>
<dbReference type="RefSeq" id="NP_001171825.1">
    <molecule id="Q9UPP1-1"/>
    <property type="nucleotide sequence ID" value="NM_001184896.1"/>
</dbReference>
<dbReference type="RefSeq" id="NP_001171826.1">
    <molecule id="Q9UPP1-4"/>
    <property type="nucleotide sequence ID" value="NM_001184897.2"/>
</dbReference>
<dbReference type="RefSeq" id="NP_001171827.1">
    <molecule id="Q9UPP1-5"/>
    <property type="nucleotide sequence ID" value="NM_001184898.2"/>
</dbReference>
<dbReference type="RefSeq" id="NP_055922.1">
    <molecule id="Q9UPP1-2"/>
    <property type="nucleotide sequence ID" value="NM_015107.3"/>
</dbReference>
<dbReference type="RefSeq" id="XP_016884851.1">
    <property type="nucleotide sequence ID" value="XM_017029362.1"/>
</dbReference>
<dbReference type="RefSeq" id="XP_047297890.1">
    <molecule id="Q9UPP1-1"/>
    <property type="nucleotide sequence ID" value="XM_047441934.1"/>
</dbReference>
<dbReference type="RefSeq" id="XP_054182696.1">
    <molecule id="Q9UPP1-1"/>
    <property type="nucleotide sequence ID" value="XM_054326721.1"/>
</dbReference>
<dbReference type="PDB" id="2WWU">
    <property type="method" value="X-ray"/>
    <property type="resolution" value="2.15 A"/>
    <property type="chains" value="A=115-483"/>
</dbReference>
<dbReference type="PDB" id="3K3N">
    <property type="method" value="X-ray"/>
    <property type="resolution" value="2.40 A"/>
    <property type="chains" value="A=122-483"/>
</dbReference>
<dbReference type="PDB" id="3K3O">
    <property type="method" value="X-ray"/>
    <property type="resolution" value="2.10 A"/>
    <property type="chains" value="A=122-483"/>
</dbReference>
<dbReference type="PDB" id="3KV4">
    <property type="method" value="X-ray"/>
    <property type="resolution" value="2.19 A"/>
    <property type="chains" value="A=37-483"/>
</dbReference>
<dbReference type="PDB" id="4DO0">
    <property type="method" value="X-ray"/>
    <property type="resolution" value="2.55 A"/>
    <property type="chains" value="A=115-483"/>
</dbReference>
<dbReference type="PDB" id="7CMZ">
    <property type="method" value="X-ray"/>
    <property type="resolution" value="1.70 A"/>
    <property type="chains" value="B=842-863"/>
</dbReference>
<dbReference type="PDBsum" id="2WWU"/>
<dbReference type="PDBsum" id="3K3N"/>
<dbReference type="PDBsum" id="3K3O"/>
<dbReference type="PDBsum" id="3KV4"/>
<dbReference type="PDBsum" id="4DO0"/>
<dbReference type="PDBsum" id="7CMZ"/>
<dbReference type="SMR" id="Q9UPP1"/>
<dbReference type="BioGRID" id="116751">
    <property type="interactions" value="178"/>
</dbReference>
<dbReference type="DIP" id="DIP-38913N"/>
<dbReference type="FunCoup" id="Q9UPP1">
    <property type="interactions" value="3712"/>
</dbReference>
<dbReference type="IntAct" id="Q9UPP1">
    <property type="interactions" value="109"/>
</dbReference>
<dbReference type="MINT" id="Q9UPP1"/>
<dbReference type="STRING" id="9606.ENSP00000350676"/>
<dbReference type="BindingDB" id="Q9UPP1"/>
<dbReference type="ChEMBL" id="CHEMBL1938212"/>
<dbReference type="GuidetoPHARMACOLOGY" id="2698"/>
<dbReference type="GlyGen" id="Q9UPP1">
    <property type="glycosylation" value="6 sites, 1 N-linked glycan (1 site), 1 O-linked glycan (4 sites)"/>
</dbReference>
<dbReference type="iPTMnet" id="Q9UPP1"/>
<dbReference type="PhosphoSitePlus" id="Q9UPP1"/>
<dbReference type="SwissPalm" id="Q9UPP1"/>
<dbReference type="BioMuta" id="PHF8"/>
<dbReference type="DMDM" id="73620986"/>
<dbReference type="jPOST" id="Q9UPP1"/>
<dbReference type="MassIVE" id="Q9UPP1"/>
<dbReference type="PaxDb" id="9606-ENSP00000350676"/>
<dbReference type="PeptideAtlas" id="Q9UPP1"/>
<dbReference type="ProteomicsDB" id="85394">
    <molecule id="Q9UPP1-1"/>
</dbReference>
<dbReference type="ProteomicsDB" id="85395">
    <molecule id="Q9UPP1-2"/>
</dbReference>
<dbReference type="ProteomicsDB" id="85396">
    <molecule id="Q9UPP1-3"/>
</dbReference>
<dbReference type="ProteomicsDB" id="85397">
    <molecule id="Q9UPP1-4"/>
</dbReference>
<dbReference type="Pumba" id="Q9UPP1"/>
<dbReference type="ABCD" id="Q9UPP1">
    <property type="antibodies" value="1 sequenced antibody"/>
</dbReference>
<dbReference type="Antibodypedia" id="26685">
    <property type="antibodies" value="133 antibodies from 25 providers"/>
</dbReference>
<dbReference type="DNASU" id="23133"/>
<dbReference type="Ensembl" id="ENST00000322659.12">
    <molecule id="Q9UPP1-5"/>
    <property type="protein sequence ID" value="ENSP00000319473.8"/>
    <property type="gene ID" value="ENSG00000172943.21"/>
</dbReference>
<dbReference type="Ensembl" id="ENST00000338154.11">
    <molecule id="Q9UPP1-2"/>
    <property type="protein sequence ID" value="ENSP00000338868.6"/>
    <property type="gene ID" value="ENSG00000172943.21"/>
</dbReference>
<dbReference type="Ensembl" id="ENST00000357988.9">
    <molecule id="Q9UPP1-1"/>
    <property type="protein sequence ID" value="ENSP00000350676.5"/>
    <property type="gene ID" value="ENSG00000172943.21"/>
</dbReference>
<dbReference type="GeneID" id="23133"/>
<dbReference type="KEGG" id="hsa:23133"/>
<dbReference type="MANE-Select" id="ENST00000338154.11">
    <molecule id="Q9UPP1-2"/>
    <property type="protein sequence ID" value="ENSP00000338868.6"/>
    <property type="RefSeq nucleotide sequence ID" value="NM_015107.3"/>
    <property type="RefSeq protein sequence ID" value="NP_055922.1"/>
</dbReference>
<dbReference type="UCSC" id="uc004dst.4">
    <molecule id="Q9UPP1-1"/>
    <property type="organism name" value="human"/>
</dbReference>
<dbReference type="AGR" id="HGNC:20672"/>
<dbReference type="CTD" id="23133"/>
<dbReference type="DisGeNET" id="23133"/>
<dbReference type="GeneCards" id="PHF8"/>
<dbReference type="HGNC" id="HGNC:20672">
    <property type="gene designation" value="PHF8"/>
</dbReference>
<dbReference type="HPA" id="ENSG00000172943">
    <property type="expression patterns" value="Low tissue specificity"/>
</dbReference>
<dbReference type="MalaCards" id="PHF8"/>
<dbReference type="MIM" id="300263">
    <property type="type" value="phenotype"/>
</dbReference>
<dbReference type="MIM" id="300560">
    <property type="type" value="gene"/>
</dbReference>
<dbReference type="neXtProt" id="NX_Q9UPP1"/>
<dbReference type="OpenTargets" id="ENSG00000172943"/>
<dbReference type="Orphanet" id="85287">
    <property type="disease" value="X-linked intellectual disability, Siderius type"/>
</dbReference>
<dbReference type="PharmGKB" id="PA134889361"/>
<dbReference type="VEuPathDB" id="HostDB:ENSG00000172943"/>
<dbReference type="eggNOG" id="KOG1633">
    <property type="taxonomic scope" value="Eukaryota"/>
</dbReference>
<dbReference type="GeneTree" id="ENSGT00940000157847"/>
<dbReference type="HOGENOM" id="CLU_003540_2_0_1"/>
<dbReference type="InParanoid" id="Q9UPP1"/>
<dbReference type="OMA" id="DIFHQNI"/>
<dbReference type="OrthoDB" id="5876800at2759"/>
<dbReference type="PAN-GO" id="Q9UPP1">
    <property type="GO annotations" value="4 GO annotations based on evolutionary models"/>
</dbReference>
<dbReference type="PhylomeDB" id="Q9UPP1"/>
<dbReference type="TreeFam" id="TF106480"/>
<dbReference type="BioCyc" id="MetaCyc:ENSG00000172943-MONOMER"/>
<dbReference type="BRENDA" id="1.14.11.65">
    <property type="organism ID" value="2681"/>
</dbReference>
<dbReference type="BRENDA" id="1.14.18.B1">
    <property type="organism ID" value="2681"/>
</dbReference>
<dbReference type="PathwayCommons" id="Q9UPP1"/>
<dbReference type="Reactome" id="R-HSA-2299718">
    <property type="pathway name" value="Condensation of Prophase Chromosomes"/>
</dbReference>
<dbReference type="Reactome" id="R-HSA-3214842">
    <property type="pathway name" value="HDMs demethylate histones"/>
</dbReference>
<dbReference type="SABIO-RK" id="Q9UPP1"/>
<dbReference type="SignaLink" id="Q9UPP1"/>
<dbReference type="SIGNOR" id="Q9UPP1"/>
<dbReference type="BioGRID-ORCS" id="23133">
    <property type="hits" value="27 hits in 797 CRISPR screens"/>
</dbReference>
<dbReference type="ChiTaRS" id="PHF8">
    <property type="organism name" value="human"/>
</dbReference>
<dbReference type="EvolutionaryTrace" id="Q9UPP1"/>
<dbReference type="GeneWiki" id="PHF8"/>
<dbReference type="GenomeRNAi" id="23133"/>
<dbReference type="Pharos" id="Q9UPP1">
    <property type="development level" value="Tchem"/>
</dbReference>
<dbReference type="PRO" id="PR:Q9UPP1"/>
<dbReference type="Proteomes" id="UP000005640">
    <property type="component" value="Chromosome X"/>
</dbReference>
<dbReference type="RNAct" id="Q9UPP1">
    <property type="molecule type" value="protein"/>
</dbReference>
<dbReference type="Bgee" id="ENSG00000172943">
    <property type="expression patterns" value="Expressed in right testis and 166 other cell types or tissues"/>
</dbReference>
<dbReference type="ExpressionAtlas" id="Q9UPP1">
    <property type="expression patterns" value="baseline and differential"/>
</dbReference>
<dbReference type="GO" id="GO:0031965">
    <property type="term" value="C:nuclear membrane"/>
    <property type="evidence" value="ECO:0000314"/>
    <property type="project" value="HPA"/>
</dbReference>
<dbReference type="GO" id="GO:0005730">
    <property type="term" value="C:nucleolus"/>
    <property type="evidence" value="ECO:0000314"/>
    <property type="project" value="UniProtKB"/>
</dbReference>
<dbReference type="GO" id="GO:0005654">
    <property type="term" value="C:nucleoplasm"/>
    <property type="evidence" value="ECO:0000314"/>
    <property type="project" value="HPA"/>
</dbReference>
<dbReference type="GO" id="GO:0005634">
    <property type="term" value="C:nucleus"/>
    <property type="evidence" value="ECO:0000314"/>
    <property type="project" value="UniProtKB"/>
</dbReference>
<dbReference type="GO" id="GO:0003682">
    <property type="term" value="F:chromatin binding"/>
    <property type="evidence" value="ECO:0000314"/>
    <property type="project" value="UniProtKB"/>
</dbReference>
<dbReference type="GO" id="GO:0032452">
    <property type="term" value="F:histone demethylase activity"/>
    <property type="evidence" value="ECO:0000314"/>
    <property type="project" value="UniProtKB"/>
</dbReference>
<dbReference type="GO" id="GO:0071558">
    <property type="term" value="F:histone H3K27me2/H3K27me3 demethylase activity"/>
    <property type="evidence" value="ECO:0000314"/>
    <property type="project" value="UniProtKB"/>
</dbReference>
<dbReference type="GO" id="GO:0051864">
    <property type="term" value="F:histone H3K36 demethylase activity"/>
    <property type="evidence" value="ECO:0000314"/>
    <property type="project" value="UniProtKB"/>
</dbReference>
<dbReference type="GO" id="GO:0140680">
    <property type="term" value="F:histone H3K36me/H3K36me2 demethylase activity"/>
    <property type="evidence" value="ECO:0007669"/>
    <property type="project" value="UniProtKB-EC"/>
</dbReference>
<dbReference type="GO" id="GO:0140002">
    <property type="term" value="F:histone H3K4me3 reader activity"/>
    <property type="evidence" value="ECO:0000314"/>
    <property type="project" value="UniProtKB"/>
</dbReference>
<dbReference type="GO" id="GO:0032454">
    <property type="term" value="F:histone H3K9 demethylase activity"/>
    <property type="evidence" value="ECO:0000314"/>
    <property type="project" value="UniProtKB"/>
</dbReference>
<dbReference type="GO" id="GO:0140683">
    <property type="term" value="F:histone H3K9me/H3K9me2 demethylase activity"/>
    <property type="evidence" value="ECO:0000314"/>
    <property type="project" value="UniProtKB"/>
</dbReference>
<dbReference type="GO" id="GO:0035575">
    <property type="term" value="F:histone H4K20 demethylase activity"/>
    <property type="evidence" value="ECO:0000314"/>
    <property type="project" value="UniProtKB"/>
</dbReference>
<dbReference type="GO" id="GO:0005506">
    <property type="term" value="F:iron ion binding"/>
    <property type="evidence" value="ECO:0000314"/>
    <property type="project" value="UniProtKB"/>
</dbReference>
<dbReference type="GO" id="GO:0035064">
    <property type="term" value="F:methylated histone binding"/>
    <property type="evidence" value="ECO:0000314"/>
    <property type="project" value="UniProtKB"/>
</dbReference>
<dbReference type="GO" id="GO:0003712">
    <property type="term" value="F:transcription coregulator activity"/>
    <property type="evidence" value="ECO:0000318"/>
    <property type="project" value="GO_Central"/>
</dbReference>
<dbReference type="GO" id="GO:0008270">
    <property type="term" value="F:zinc ion binding"/>
    <property type="evidence" value="ECO:0000314"/>
    <property type="project" value="UniProtKB"/>
</dbReference>
<dbReference type="GO" id="GO:0007420">
    <property type="term" value="P:brain development"/>
    <property type="evidence" value="ECO:0000250"/>
    <property type="project" value="UniProtKB"/>
</dbReference>
<dbReference type="GO" id="GO:0006338">
    <property type="term" value="P:chromatin remodeling"/>
    <property type="evidence" value="ECO:0000318"/>
    <property type="project" value="GO_Central"/>
</dbReference>
<dbReference type="GO" id="GO:0000082">
    <property type="term" value="P:G1/S transition of mitotic cell cycle"/>
    <property type="evidence" value="ECO:0000315"/>
    <property type="project" value="UniProtKB"/>
</dbReference>
<dbReference type="GO" id="GO:0061188">
    <property type="term" value="P:negative regulation of rDNA heterochromatin formation"/>
    <property type="evidence" value="ECO:0000314"/>
    <property type="project" value="UniProtKB"/>
</dbReference>
<dbReference type="GO" id="GO:0045893">
    <property type="term" value="P:positive regulation of DNA-templated transcription"/>
    <property type="evidence" value="ECO:0000314"/>
    <property type="project" value="UniProtKB"/>
</dbReference>
<dbReference type="GO" id="GO:0045943">
    <property type="term" value="P:positive regulation of transcription by RNA polymerase I"/>
    <property type="evidence" value="ECO:0000314"/>
    <property type="project" value="UniProtKB"/>
</dbReference>
<dbReference type="GO" id="GO:0045944">
    <property type="term" value="P:positive regulation of transcription by RNA polymerase II"/>
    <property type="evidence" value="ECO:0000314"/>
    <property type="project" value="UniProtKB"/>
</dbReference>
<dbReference type="GO" id="GO:0006357">
    <property type="term" value="P:regulation of transcription by RNA polymerase II"/>
    <property type="evidence" value="ECO:0000318"/>
    <property type="project" value="GO_Central"/>
</dbReference>
<dbReference type="CDD" id="cd15642">
    <property type="entry name" value="PHD_PHF8"/>
    <property type="match status" value="1"/>
</dbReference>
<dbReference type="FunFam" id="1.20.58.1360:FF:000001">
    <property type="entry name" value="Histone lysine demethylase PHF8"/>
    <property type="match status" value="1"/>
</dbReference>
<dbReference type="FunFam" id="2.60.120.650:FF:000006">
    <property type="entry name" value="histone lysine demethylase PHF8 isoform X1"/>
    <property type="match status" value="1"/>
</dbReference>
<dbReference type="FunFam" id="3.30.40.10:FF:000193">
    <property type="entry name" value="lysine-specific demethylase PHF2 isoform X1"/>
    <property type="match status" value="1"/>
</dbReference>
<dbReference type="Gene3D" id="1.20.58.1360">
    <property type="match status" value="1"/>
</dbReference>
<dbReference type="Gene3D" id="2.60.120.650">
    <property type="entry name" value="Cupin"/>
    <property type="match status" value="1"/>
</dbReference>
<dbReference type="InterPro" id="IPR041070">
    <property type="entry name" value="JHD"/>
</dbReference>
<dbReference type="InterPro" id="IPR050690">
    <property type="entry name" value="JHDM1_Histone_Demethylase"/>
</dbReference>
<dbReference type="InterPro" id="IPR003347">
    <property type="entry name" value="JmjC_dom"/>
</dbReference>
<dbReference type="InterPro" id="IPR019786">
    <property type="entry name" value="Zinc_finger_PHD-type_CS"/>
</dbReference>
<dbReference type="InterPro" id="IPR011011">
    <property type="entry name" value="Znf_FYVE_PHD"/>
</dbReference>
<dbReference type="InterPro" id="IPR001965">
    <property type="entry name" value="Znf_PHD"/>
</dbReference>
<dbReference type="InterPro" id="IPR019787">
    <property type="entry name" value="Znf_PHD-finger"/>
</dbReference>
<dbReference type="PANTHER" id="PTHR23123">
    <property type="entry name" value="PHD/F-BOX CONTAINING PROTEIN"/>
    <property type="match status" value="1"/>
</dbReference>
<dbReference type="Pfam" id="PF17811">
    <property type="entry name" value="JHD"/>
    <property type="match status" value="1"/>
</dbReference>
<dbReference type="Pfam" id="PF02373">
    <property type="entry name" value="JmjC"/>
    <property type="match status" value="1"/>
</dbReference>
<dbReference type="Pfam" id="PF00628">
    <property type="entry name" value="PHD"/>
    <property type="match status" value="1"/>
</dbReference>
<dbReference type="SMART" id="SM00558">
    <property type="entry name" value="JmjC"/>
    <property type="match status" value="1"/>
</dbReference>
<dbReference type="SMART" id="SM00249">
    <property type="entry name" value="PHD"/>
    <property type="match status" value="1"/>
</dbReference>
<dbReference type="SUPFAM" id="SSF51197">
    <property type="entry name" value="Clavaminate synthase-like"/>
    <property type="match status" value="1"/>
</dbReference>
<dbReference type="SUPFAM" id="SSF57903">
    <property type="entry name" value="FYVE/PHD zinc finger"/>
    <property type="match status" value="1"/>
</dbReference>
<dbReference type="PROSITE" id="PS51184">
    <property type="entry name" value="JMJC"/>
    <property type="match status" value="1"/>
</dbReference>
<dbReference type="PROSITE" id="PS01359">
    <property type="entry name" value="ZF_PHD_1"/>
    <property type="match status" value="1"/>
</dbReference>
<dbReference type="PROSITE" id="PS50016">
    <property type="entry name" value="ZF_PHD_2"/>
    <property type="match status" value="1"/>
</dbReference>